<keyword id="KW-0997">Cell inner membrane</keyword>
<keyword id="KW-1003">Cell membrane</keyword>
<keyword id="KW-0441">Lipid A biosynthesis</keyword>
<keyword id="KW-0444">Lipid biosynthesis</keyword>
<keyword id="KW-0443">Lipid metabolism</keyword>
<keyword id="KW-0448">Lipopolysaccharide biosynthesis</keyword>
<keyword id="KW-0472">Membrane</keyword>
<keyword id="KW-0812">Transmembrane</keyword>
<keyword id="KW-1133">Transmembrane helix</keyword>
<keyword id="KW-0813">Transport</keyword>
<feature type="chain" id="PRO_0000382021" description="Probable 4-amino-4-deoxy-L-arabinose-phosphoundecaprenol flippase subunit ArnF">
    <location>
        <begin position="1"/>
        <end position="130"/>
    </location>
</feature>
<feature type="topological domain" description="Cytoplasmic" evidence="1">
    <location>
        <begin position="1"/>
        <end position="4"/>
    </location>
</feature>
<feature type="transmembrane region" description="Helical" evidence="1">
    <location>
        <begin position="5"/>
        <end position="25"/>
    </location>
</feature>
<feature type="topological domain" description="Periplasmic" evidence="1">
    <location>
        <begin position="26"/>
        <end position="44"/>
    </location>
</feature>
<feature type="transmembrane region" description="Helical" evidence="1">
    <location>
        <begin position="45"/>
        <end position="65"/>
    </location>
</feature>
<feature type="topological domain" description="Cytoplasmic" evidence="1">
    <location>
        <begin position="66"/>
        <end position="74"/>
    </location>
</feature>
<feature type="transmembrane region" description="Helical" evidence="1">
    <location>
        <begin position="75"/>
        <end position="95"/>
    </location>
</feature>
<feature type="topological domain" description="Periplasmic" evidence="1">
    <location>
        <begin position="96"/>
        <end position="103"/>
    </location>
</feature>
<feature type="transmembrane region" description="Helical" evidence="1">
    <location>
        <begin position="104"/>
        <end position="124"/>
    </location>
</feature>
<feature type="topological domain" description="Cytoplasmic" evidence="1">
    <location>
        <begin position="125"/>
        <end position="130"/>
    </location>
</feature>
<proteinExistence type="inferred from homology"/>
<protein>
    <recommendedName>
        <fullName evidence="1">Probable 4-amino-4-deoxy-L-arabinose-phosphoundecaprenol flippase subunit ArnF</fullName>
        <shortName evidence="1">L-Ara4N-phosphoundecaprenol flippase subunit ArnF</shortName>
    </recommendedName>
    <alternativeName>
        <fullName evidence="1">Undecaprenyl phosphate-aminoarabinose flippase subunit ArnF</fullName>
    </alternativeName>
</protein>
<gene>
    <name evidence="1" type="primary">arnF</name>
    <name type="ordered locus">SG1839</name>
</gene>
<sequence>MGYGWALFSVALVSAAQLLLKWVMMHLPPLGALRLWLDPAYAEPLALLMGGLLAYVCSMGCWFMALRRLPLNKAYPLLSLSYVLVAACALMIPEFNERFTFSRLMGVALICGGLLLICLPAGGKGDTPRR</sequence>
<organism>
    <name type="scientific">Sodalis glossinidius (strain morsitans)</name>
    <dbReference type="NCBI Taxonomy" id="343509"/>
    <lineage>
        <taxon>Bacteria</taxon>
        <taxon>Pseudomonadati</taxon>
        <taxon>Pseudomonadota</taxon>
        <taxon>Gammaproteobacteria</taxon>
        <taxon>Enterobacterales</taxon>
        <taxon>Bruguierivoracaceae</taxon>
        <taxon>Sodalis</taxon>
    </lineage>
</organism>
<evidence type="ECO:0000255" key="1">
    <source>
        <dbReference type="HAMAP-Rule" id="MF_00538"/>
    </source>
</evidence>
<evidence type="ECO:0000305" key="2"/>
<name>ARNF_SODGM</name>
<comment type="function">
    <text evidence="1">Translocates 4-amino-4-deoxy-L-arabinose-phosphoundecaprenol (alpha-L-Ara4N-phosphoundecaprenol) from the cytoplasmic to the periplasmic side of the inner membrane.</text>
</comment>
<comment type="pathway">
    <text evidence="1">Bacterial outer membrane biogenesis; lipopolysaccharide biosynthesis.</text>
</comment>
<comment type="subunit">
    <text evidence="1">Heterodimer of ArnE and ArnF.</text>
</comment>
<comment type="subcellular location">
    <subcellularLocation>
        <location evidence="1">Cell inner membrane</location>
        <topology evidence="1">Multi-pass membrane protein</topology>
    </subcellularLocation>
</comment>
<comment type="similarity">
    <text evidence="1">Belongs to the ArnF family.</text>
</comment>
<comment type="sequence caution" evidence="2">
    <conflict type="erroneous initiation">
        <sequence resource="EMBL-CDS" id="BAE75114"/>
    </conflict>
</comment>
<accession>Q2NRW1</accession>
<reference key="1">
    <citation type="journal article" date="2006" name="Genome Res.">
        <title>Massive genome erosion and functional adaptations provide insights into the symbiotic lifestyle of Sodalis glossinidius in the tsetse host.</title>
        <authorList>
            <person name="Toh H."/>
            <person name="Weiss B.L."/>
            <person name="Perkin S.A.H."/>
            <person name="Yamashita A."/>
            <person name="Oshima K."/>
            <person name="Hattori M."/>
            <person name="Aksoy S."/>
        </authorList>
    </citation>
    <scope>NUCLEOTIDE SEQUENCE [LARGE SCALE GENOMIC DNA]</scope>
    <source>
        <strain>morsitans</strain>
    </source>
</reference>
<dbReference type="EMBL" id="AP008232">
    <property type="protein sequence ID" value="BAE75114.1"/>
    <property type="status" value="ALT_INIT"/>
    <property type="molecule type" value="Genomic_DNA"/>
</dbReference>
<dbReference type="RefSeq" id="WP_041867130.1">
    <property type="nucleotide sequence ID" value="NC_007712.1"/>
</dbReference>
<dbReference type="STRING" id="343509.SG1839"/>
<dbReference type="KEGG" id="sgl:SG1839"/>
<dbReference type="eggNOG" id="COG2076">
    <property type="taxonomic scope" value="Bacteria"/>
</dbReference>
<dbReference type="HOGENOM" id="CLU_131462_1_0_6"/>
<dbReference type="OrthoDB" id="5592809at2"/>
<dbReference type="BioCyc" id="SGLO343509:SGP1_RS16665-MONOMER"/>
<dbReference type="UniPathway" id="UPA00030"/>
<dbReference type="Proteomes" id="UP000001932">
    <property type="component" value="Chromosome"/>
</dbReference>
<dbReference type="GO" id="GO:0005886">
    <property type="term" value="C:plasma membrane"/>
    <property type="evidence" value="ECO:0007669"/>
    <property type="project" value="UniProtKB-SubCell"/>
</dbReference>
<dbReference type="GO" id="GO:1901505">
    <property type="term" value="F:carbohydrate derivative transmembrane transporter activity"/>
    <property type="evidence" value="ECO:0007669"/>
    <property type="project" value="InterPro"/>
</dbReference>
<dbReference type="GO" id="GO:0009245">
    <property type="term" value="P:lipid A biosynthetic process"/>
    <property type="evidence" value="ECO:0007669"/>
    <property type="project" value="UniProtKB-UniRule"/>
</dbReference>
<dbReference type="GO" id="GO:0009103">
    <property type="term" value="P:lipopolysaccharide biosynthetic process"/>
    <property type="evidence" value="ECO:0007669"/>
    <property type="project" value="UniProtKB-UniRule"/>
</dbReference>
<dbReference type="Gene3D" id="1.10.3730.20">
    <property type="match status" value="1"/>
</dbReference>
<dbReference type="HAMAP" id="MF_00538">
    <property type="entry name" value="Flippase_ArnF"/>
    <property type="match status" value="1"/>
</dbReference>
<dbReference type="InterPro" id="IPR000620">
    <property type="entry name" value="EamA_dom"/>
</dbReference>
<dbReference type="InterPro" id="IPR022832">
    <property type="entry name" value="Flippase_ArnF"/>
</dbReference>
<dbReference type="InterPro" id="IPR000390">
    <property type="entry name" value="Small_drug/metabolite_transptr"/>
</dbReference>
<dbReference type="NCBIfam" id="NF002816">
    <property type="entry name" value="PRK02971.1-2"/>
    <property type="match status" value="1"/>
</dbReference>
<dbReference type="PANTHER" id="PTHR30561:SF9">
    <property type="entry name" value="4-AMINO-4-DEOXY-L-ARABINOSE-PHOSPHOUNDECAPRENOL FLIPPASE SUBUNIT ARNF-RELATED"/>
    <property type="match status" value="1"/>
</dbReference>
<dbReference type="PANTHER" id="PTHR30561">
    <property type="entry name" value="SMR FAMILY PROTON-DEPENDENT DRUG EFFLUX TRANSPORTER SUGE"/>
    <property type="match status" value="1"/>
</dbReference>
<dbReference type="Pfam" id="PF00892">
    <property type="entry name" value="EamA"/>
    <property type="match status" value="1"/>
</dbReference>
<dbReference type="SUPFAM" id="SSF103481">
    <property type="entry name" value="Multidrug resistance efflux transporter EmrE"/>
    <property type="match status" value="1"/>
</dbReference>